<comment type="function">
    <text evidence="1">Contributes to K(+)/H(+) antiport activity by supporting proton efflux to control proton extrusion and homeostasis in chloroplasts in a light-dependent manner to modulate photosynthesis. Prevents excessive induction of non-photochemical quenching (NPQ) under continuous-light conditions. Indirectly promotes efficient inorganic carbon uptake into chloroplasts.</text>
</comment>
<comment type="catalytic activity">
    <reaction evidence="1">
        <text>K(+)(in) + H(+)(out) = K(+)(out) + H(+)(in)</text>
        <dbReference type="Rhea" id="RHEA:29467"/>
        <dbReference type="ChEBI" id="CHEBI:15378"/>
        <dbReference type="ChEBI" id="CHEBI:29103"/>
    </reaction>
</comment>
<comment type="subcellular location">
    <subcellularLocation>
        <location evidence="1">Plastid</location>
        <location evidence="1">Chloroplast inner membrane</location>
        <topology evidence="1">Multi-pass membrane protein</topology>
    </subcellularLocation>
</comment>
<comment type="similarity">
    <text evidence="1 2">Belongs to the CemA family.</text>
</comment>
<geneLocation type="chloroplast"/>
<evidence type="ECO:0000255" key="1">
    <source>
        <dbReference type="HAMAP-Rule" id="MF_01308"/>
    </source>
</evidence>
<evidence type="ECO:0000305" key="2"/>
<keyword id="KW-0050">Antiport</keyword>
<keyword id="KW-0150">Chloroplast</keyword>
<keyword id="KW-0375">Hydrogen ion transport</keyword>
<keyword id="KW-0406">Ion transport</keyword>
<keyword id="KW-0472">Membrane</keyword>
<keyword id="KW-0934">Plastid</keyword>
<keyword id="KW-1001">Plastid inner membrane</keyword>
<keyword id="KW-0630">Potassium</keyword>
<keyword id="KW-0633">Potassium transport</keyword>
<keyword id="KW-0812">Transmembrane</keyword>
<keyword id="KW-1133">Transmembrane helix</keyword>
<keyword id="KW-0813">Transport</keyword>
<protein>
    <recommendedName>
        <fullName evidence="1">Potassium/proton antiporter CemA</fullName>
    </recommendedName>
    <alternativeName>
        <fullName evidence="1">Chloroplast envelope membrane protein A</fullName>
        <shortName evidence="1">CemA</shortName>
    </alternativeName>
</protein>
<name>CEMA_CRYJA</name>
<gene>
    <name evidence="1" type="primary">cemA</name>
</gene>
<sequence length="261" mass="30576">MDLIPRSIIRTLFRFWTELTSQSSSLAIHELEVAKYKTFASLQYLTCLIVLPWAISISLQNSLESWVTNWWNTGQSKKIFDYLQEENAIRKFEKIEELFLLEIMVKDYSETPSQDIRVEMQKKMIQLVKIYNQDCIHIISHLLANLIGLVLLSVCLILGKKKLGILNSWIQEVFYSLSDTMKAFSILLVTDLCIGFHSPHGWELMINWIFENYGFAHNERIISGLVSTFPVILDTIFKYWIFRRLNRISPSLVVIYHSMNE</sequence>
<reference key="1">
    <citation type="journal article" date="2008" name="BMC Plant Biol.">
        <title>Complete nucleotide sequence of the Cryptomeria japonica D. Don. chloroplast genome and comparative chloroplast genomics: diversified genomic structure of coniferous species.</title>
        <authorList>
            <person name="Hirao T."/>
            <person name="Watanabe A."/>
            <person name="Kurita M."/>
            <person name="Kondo T."/>
            <person name="Takata K."/>
        </authorList>
    </citation>
    <scope>NUCLEOTIDE SEQUENCE [LARGE SCALE GENOMIC DNA]</scope>
</reference>
<proteinExistence type="inferred from homology"/>
<feature type="chain" id="PRO_0000346541" description="Potassium/proton antiporter CemA">
    <location>
        <begin position="1"/>
        <end position="261"/>
    </location>
</feature>
<feature type="transmembrane region" description="Helical" evidence="1">
    <location>
        <begin position="138"/>
        <end position="158"/>
    </location>
</feature>
<feature type="transmembrane region" description="Helical" evidence="1">
    <location>
        <begin position="186"/>
        <end position="206"/>
    </location>
</feature>
<feature type="transmembrane region" description="Helical" evidence="1">
    <location>
        <begin position="221"/>
        <end position="241"/>
    </location>
</feature>
<accession>B1VKB8</accession>
<dbReference type="EMBL" id="AP009377">
    <property type="protein sequence ID" value="BAG16629.1"/>
    <property type="molecule type" value="Genomic_DNA"/>
</dbReference>
<dbReference type="RefSeq" id="YP_001806631.1">
    <property type="nucleotide sequence ID" value="NC_010548.1"/>
</dbReference>
<dbReference type="GeneID" id="6166555"/>
<dbReference type="KEGG" id="cjf:6166555"/>
<dbReference type="OrthoDB" id="993at2759"/>
<dbReference type="GO" id="GO:0009706">
    <property type="term" value="C:chloroplast inner membrane"/>
    <property type="evidence" value="ECO:0007669"/>
    <property type="project" value="UniProtKB-SubCell"/>
</dbReference>
<dbReference type="GO" id="GO:0015297">
    <property type="term" value="F:antiporter activity"/>
    <property type="evidence" value="ECO:0007669"/>
    <property type="project" value="UniProtKB-KW"/>
</dbReference>
<dbReference type="GO" id="GO:0015078">
    <property type="term" value="F:proton transmembrane transporter activity"/>
    <property type="evidence" value="ECO:0007669"/>
    <property type="project" value="UniProtKB-UniRule"/>
</dbReference>
<dbReference type="GO" id="GO:0006813">
    <property type="term" value="P:potassium ion transport"/>
    <property type="evidence" value="ECO:0007669"/>
    <property type="project" value="UniProtKB-UniRule"/>
</dbReference>
<dbReference type="HAMAP" id="MF_01308">
    <property type="entry name" value="CemA_PxcA"/>
    <property type="match status" value="1"/>
</dbReference>
<dbReference type="InterPro" id="IPR004282">
    <property type="entry name" value="CemA"/>
</dbReference>
<dbReference type="PANTHER" id="PTHR33650:SF2">
    <property type="entry name" value="CHLOROPLAST ENVELOPE MEMBRANE PROTEIN"/>
    <property type="match status" value="1"/>
</dbReference>
<dbReference type="PANTHER" id="PTHR33650">
    <property type="entry name" value="CHLOROPLAST ENVELOPE MEMBRANE PROTEIN-RELATED"/>
    <property type="match status" value="1"/>
</dbReference>
<dbReference type="Pfam" id="PF03040">
    <property type="entry name" value="CemA"/>
    <property type="match status" value="1"/>
</dbReference>
<organism>
    <name type="scientific">Cryptomeria japonica</name>
    <name type="common">Japanese cedar</name>
    <name type="synonym">Cupressus japonica</name>
    <dbReference type="NCBI Taxonomy" id="3369"/>
    <lineage>
        <taxon>Eukaryota</taxon>
        <taxon>Viridiplantae</taxon>
        <taxon>Streptophyta</taxon>
        <taxon>Embryophyta</taxon>
        <taxon>Tracheophyta</taxon>
        <taxon>Spermatophyta</taxon>
        <taxon>Pinopsida</taxon>
        <taxon>Pinidae</taxon>
        <taxon>Conifers II</taxon>
        <taxon>Cupressales</taxon>
        <taxon>Cupressaceae</taxon>
        <taxon>Cryptomeria</taxon>
    </lineage>
</organism>